<accession>Q669K7</accession>
<protein>
    <recommendedName>
        <fullName evidence="1">7-methyl-GTP pyrophosphatase</fullName>
        <shortName evidence="1">m(7)GTP pyrophosphatase</shortName>
        <ecNumber evidence="1">3.6.1.-</ecNumber>
    </recommendedName>
</protein>
<gene>
    <name type="ordered locus">YPTB2477</name>
</gene>
<feature type="chain" id="PRO_0000267476" description="7-methyl-GTP pyrophosphatase">
    <location>
        <begin position="1"/>
        <end position="198"/>
    </location>
</feature>
<feature type="active site" description="Proton acceptor" evidence="1">
    <location>
        <position position="69"/>
    </location>
</feature>
<feature type="site" description="Important for substrate specificity" evidence="1">
    <location>
        <position position="12"/>
    </location>
</feature>
<feature type="site" description="Important for substrate specificity" evidence="1">
    <location>
        <position position="70"/>
    </location>
</feature>
<feature type="site" description="Important for substrate specificity" evidence="1">
    <location>
        <position position="154"/>
    </location>
</feature>
<name>NTPPB_YERPS</name>
<dbReference type="EC" id="3.6.1.-" evidence="1"/>
<dbReference type="EMBL" id="BX936398">
    <property type="protein sequence ID" value="CAH21715.1"/>
    <property type="status" value="ALT_INIT"/>
    <property type="molecule type" value="Genomic_DNA"/>
</dbReference>
<dbReference type="RefSeq" id="WP_011192607.1">
    <property type="nucleotide sequence ID" value="NC_006155.1"/>
</dbReference>
<dbReference type="SMR" id="Q669K7"/>
<dbReference type="GeneID" id="49785519"/>
<dbReference type="KEGG" id="ypo:BZ17_4159"/>
<dbReference type="KEGG" id="yps:YPTB2477"/>
<dbReference type="PATRIC" id="fig|273123.14.peg.4382"/>
<dbReference type="Proteomes" id="UP000001011">
    <property type="component" value="Chromosome"/>
</dbReference>
<dbReference type="GO" id="GO:0005737">
    <property type="term" value="C:cytoplasm"/>
    <property type="evidence" value="ECO:0007669"/>
    <property type="project" value="UniProtKB-SubCell"/>
</dbReference>
<dbReference type="GO" id="GO:0047429">
    <property type="term" value="F:nucleoside triphosphate diphosphatase activity"/>
    <property type="evidence" value="ECO:0007669"/>
    <property type="project" value="InterPro"/>
</dbReference>
<dbReference type="GO" id="GO:0009117">
    <property type="term" value="P:nucleotide metabolic process"/>
    <property type="evidence" value="ECO:0007669"/>
    <property type="project" value="UniProtKB-KW"/>
</dbReference>
<dbReference type="CDD" id="cd00555">
    <property type="entry name" value="Maf"/>
    <property type="match status" value="1"/>
</dbReference>
<dbReference type="FunFam" id="3.90.950.10:FF:000005">
    <property type="entry name" value="7-methyl-GTP pyrophosphatase"/>
    <property type="match status" value="1"/>
</dbReference>
<dbReference type="Gene3D" id="3.90.950.10">
    <property type="match status" value="1"/>
</dbReference>
<dbReference type="HAMAP" id="MF_00528">
    <property type="entry name" value="Maf"/>
    <property type="match status" value="1"/>
</dbReference>
<dbReference type="InterPro" id="IPR029001">
    <property type="entry name" value="ITPase-like_fam"/>
</dbReference>
<dbReference type="InterPro" id="IPR003697">
    <property type="entry name" value="Maf-like"/>
</dbReference>
<dbReference type="NCBIfam" id="TIGR00172">
    <property type="entry name" value="maf"/>
    <property type="match status" value="1"/>
</dbReference>
<dbReference type="PANTHER" id="PTHR43213:SF10">
    <property type="entry name" value="7-METHYL-GTP PYROPHOSPHATASE"/>
    <property type="match status" value="1"/>
</dbReference>
<dbReference type="PANTHER" id="PTHR43213">
    <property type="entry name" value="BIFUNCTIONAL DTTP/UTP PYROPHOSPHATASE/METHYLTRANSFERASE PROTEIN-RELATED"/>
    <property type="match status" value="1"/>
</dbReference>
<dbReference type="Pfam" id="PF02545">
    <property type="entry name" value="Maf"/>
    <property type="match status" value="1"/>
</dbReference>
<dbReference type="PIRSF" id="PIRSF006305">
    <property type="entry name" value="Maf"/>
    <property type="match status" value="1"/>
</dbReference>
<dbReference type="SUPFAM" id="SSF52972">
    <property type="entry name" value="ITPase-like"/>
    <property type="match status" value="1"/>
</dbReference>
<keyword id="KW-0963">Cytoplasm</keyword>
<keyword id="KW-0378">Hydrolase</keyword>
<keyword id="KW-0546">Nucleotide metabolism</keyword>
<comment type="function">
    <text evidence="1">Nucleoside triphosphate pyrophosphatase that hydrolyzes 7-methyl-GTP (m(7)GTP). May have a dual role in cell division arrest and in preventing the incorporation of modified nucleotides into cellular nucleic acids.</text>
</comment>
<comment type="catalytic activity">
    <reaction evidence="1">
        <text>N(7)-methyl-GTP + H2O = N(7)-methyl-GMP + diphosphate + H(+)</text>
        <dbReference type="Rhea" id="RHEA:58744"/>
        <dbReference type="ChEBI" id="CHEBI:15377"/>
        <dbReference type="ChEBI" id="CHEBI:15378"/>
        <dbReference type="ChEBI" id="CHEBI:33019"/>
        <dbReference type="ChEBI" id="CHEBI:58285"/>
        <dbReference type="ChEBI" id="CHEBI:87133"/>
    </reaction>
</comment>
<comment type="cofactor">
    <cofactor evidence="1">
        <name>a divalent metal cation</name>
        <dbReference type="ChEBI" id="CHEBI:60240"/>
    </cofactor>
</comment>
<comment type="subcellular location">
    <subcellularLocation>
        <location evidence="1">Cytoplasm</location>
    </subcellularLocation>
</comment>
<comment type="similarity">
    <text evidence="1">Belongs to the Maf family. YceF subfamily.</text>
</comment>
<comment type="sequence caution" evidence="2">
    <conflict type="erroneous initiation">
        <sequence resource="EMBL-CDS" id="CAH21715"/>
    </conflict>
</comment>
<proteinExistence type="inferred from homology"/>
<organism>
    <name type="scientific">Yersinia pseudotuberculosis serotype I (strain IP32953)</name>
    <dbReference type="NCBI Taxonomy" id="273123"/>
    <lineage>
        <taxon>Bacteria</taxon>
        <taxon>Pseudomonadati</taxon>
        <taxon>Pseudomonadota</taxon>
        <taxon>Gammaproteobacteria</taxon>
        <taxon>Enterobacterales</taxon>
        <taxon>Yersiniaceae</taxon>
        <taxon>Yersinia</taxon>
    </lineage>
</organism>
<sequence>MPQLVLASTSSYRRALLEKLQLPFITDAPETDETPHAGEPAEALVQRLASAKAQALAGRYPQHLIIGSDQVCVIDGKITGKPLQYSTAVKQLQQASGQCVTFYTGLTLLNTANNSINCTCETFDVYFRTLSQAEIDGYLLREQPWNCAGSFKSEGLGITLFERLAGRDPNTLIGLPLIALTQMLIEQGVNPLTVKPVE</sequence>
<evidence type="ECO:0000255" key="1">
    <source>
        <dbReference type="HAMAP-Rule" id="MF_00528"/>
    </source>
</evidence>
<evidence type="ECO:0000305" key="2"/>
<reference key="1">
    <citation type="journal article" date="2004" name="Proc. Natl. Acad. Sci. U.S.A.">
        <title>Insights into the evolution of Yersinia pestis through whole-genome comparison with Yersinia pseudotuberculosis.</title>
        <authorList>
            <person name="Chain P.S.G."/>
            <person name="Carniel E."/>
            <person name="Larimer F.W."/>
            <person name="Lamerdin J."/>
            <person name="Stoutland P.O."/>
            <person name="Regala W.M."/>
            <person name="Georgescu A.M."/>
            <person name="Vergez L.M."/>
            <person name="Land M.L."/>
            <person name="Motin V.L."/>
            <person name="Brubaker R.R."/>
            <person name="Fowler J."/>
            <person name="Hinnebusch J."/>
            <person name="Marceau M."/>
            <person name="Medigue C."/>
            <person name="Simonet M."/>
            <person name="Chenal-Francisque V."/>
            <person name="Souza B."/>
            <person name="Dacheux D."/>
            <person name="Elliott J.M."/>
            <person name="Derbise A."/>
            <person name="Hauser L.J."/>
            <person name="Garcia E."/>
        </authorList>
    </citation>
    <scope>NUCLEOTIDE SEQUENCE [LARGE SCALE GENOMIC DNA]</scope>
    <source>
        <strain>IP32953</strain>
    </source>
</reference>